<gene>
    <name evidence="1" type="primary">dcd</name>
    <name type="ordered locus">BPP0760</name>
</gene>
<evidence type="ECO:0000255" key="1">
    <source>
        <dbReference type="HAMAP-Rule" id="MF_00146"/>
    </source>
</evidence>
<dbReference type="EC" id="3.5.4.13" evidence="1"/>
<dbReference type="EMBL" id="BX640425">
    <property type="protein sequence ID" value="CAE40169.1"/>
    <property type="molecule type" value="Genomic_DNA"/>
</dbReference>
<dbReference type="RefSeq" id="WP_003808382.1">
    <property type="nucleotide sequence ID" value="NC_002928.3"/>
</dbReference>
<dbReference type="SMR" id="Q7W1D3"/>
<dbReference type="GeneID" id="93202510"/>
<dbReference type="KEGG" id="bpa:BPP0760"/>
<dbReference type="HOGENOM" id="CLU_087476_4_0_4"/>
<dbReference type="UniPathway" id="UPA00610">
    <property type="reaction ID" value="UER00665"/>
</dbReference>
<dbReference type="Proteomes" id="UP000001421">
    <property type="component" value="Chromosome"/>
</dbReference>
<dbReference type="GO" id="GO:0008829">
    <property type="term" value="F:dCTP deaminase activity"/>
    <property type="evidence" value="ECO:0007669"/>
    <property type="project" value="UniProtKB-UniRule"/>
</dbReference>
<dbReference type="GO" id="GO:0000166">
    <property type="term" value="F:nucleotide binding"/>
    <property type="evidence" value="ECO:0007669"/>
    <property type="project" value="UniProtKB-KW"/>
</dbReference>
<dbReference type="GO" id="GO:0006226">
    <property type="term" value="P:dUMP biosynthetic process"/>
    <property type="evidence" value="ECO:0007669"/>
    <property type="project" value="UniProtKB-UniPathway"/>
</dbReference>
<dbReference type="GO" id="GO:0006229">
    <property type="term" value="P:dUTP biosynthetic process"/>
    <property type="evidence" value="ECO:0007669"/>
    <property type="project" value="UniProtKB-UniRule"/>
</dbReference>
<dbReference type="GO" id="GO:0015949">
    <property type="term" value="P:nucleobase-containing small molecule interconversion"/>
    <property type="evidence" value="ECO:0007669"/>
    <property type="project" value="TreeGrafter"/>
</dbReference>
<dbReference type="CDD" id="cd07557">
    <property type="entry name" value="trimeric_dUTPase"/>
    <property type="match status" value="1"/>
</dbReference>
<dbReference type="FunFam" id="2.70.40.10:FF:000001">
    <property type="entry name" value="dCTP deaminase"/>
    <property type="match status" value="1"/>
</dbReference>
<dbReference type="Gene3D" id="2.70.40.10">
    <property type="match status" value="1"/>
</dbReference>
<dbReference type="HAMAP" id="MF_00146">
    <property type="entry name" value="dCTP_deaminase"/>
    <property type="match status" value="1"/>
</dbReference>
<dbReference type="InterPro" id="IPR011962">
    <property type="entry name" value="dCTP_deaminase"/>
</dbReference>
<dbReference type="InterPro" id="IPR036157">
    <property type="entry name" value="dUTPase-like_sf"/>
</dbReference>
<dbReference type="InterPro" id="IPR033704">
    <property type="entry name" value="dUTPase_trimeric"/>
</dbReference>
<dbReference type="NCBIfam" id="TIGR02274">
    <property type="entry name" value="dCTP_deam"/>
    <property type="match status" value="1"/>
</dbReference>
<dbReference type="PANTHER" id="PTHR42680">
    <property type="entry name" value="DCTP DEAMINASE"/>
    <property type="match status" value="1"/>
</dbReference>
<dbReference type="PANTHER" id="PTHR42680:SF3">
    <property type="entry name" value="DCTP DEAMINASE"/>
    <property type="match status" value="1"/>
</dbReference>
<dbReference type="Pfam" id="PF22769">
    <property type="entry name" value="DCD"/>
    <property type="match status" value="1"/>
</dbReference>
<dbReference type="SUPFAM" id="SSF51283">
    <property type="entry name" value="dUTPase-like"/>
    <property type="match status" value="1"/>
</dbReference>
<protein>
    <recommendedName>
        <fullName evidence="1">dCTP deaminase</fullName>
        <ecNumber evidence="1">3.5.4.13</ecNumber>
    </recommendedName>
    <alternativeName>
        <fullName evidence="1">Deoxycytidine triphosphate deaminase</fullName>
    </alternativeName>
</protein>
<proteinExistence type="inferred from homology"/>
<organism>
    <name type="scientific">Bordetella parapertussis (strain 12822 / ATCC BAA-587 / NCTC 13253)</name>
    <dbReference type="NCBI Taxonomy" id="257311"/>
    <lineage>
        <taxon>Bacteria</taxon>
        <taxon>Pseudomonadati</taxon>
        <taxon>Pseudomonadota</taxon>
        <taxon>Betaproteobacteria</taxon>
        <taxon>Burkholderiales</taxon>
        <taxon>Alcaligenaceae</taxon>
        <taxon>Bordetella</taxon>
    </lineage>
</organism>
<accession>Q7W1D3</accession>
<keyword id="KW-0378">Hydrolase</keyword>
<keyword id="KW-0546">Nucleotide metabolism</keyword>
<keyword id="KW-0547">Nucleotide-binding</keyword>
<sequence>MSIKSDRWIRRAAEAGMIEPFEPGQVRTAGGNRIVSYGTSSYGYDVRCADEFKIFTNINSTIVDPKQFDEKSFVDFKGDVCIIPPNSFALARTVEYFRIPRSVLTICLGKSTYARCGIIVNVTPLEPEWEGHVTLEFSNTTPLPAKIYAGEGCAQMLFLESDEVCETSYRDRGGKYQGQRGVTLPRT</sequence>
<comment type="function">
    <text evidence="1">Catalyzes the deamination of dCTP to dUTP.</text>
</comment>
<comment type="catalytic activity">
    <reaction evidence="1">
        <text>dCTP + H2O + H(+) = dUTP + NH4(+)</text>
        <dbReference type="Rhea" id="RHEA:22680"/>
        <dbReference type="ChEBI" id="CHEBI:15377"/>
        <dbReference type="ChEBI" id="CHEBI:15378"/>
        <dbReference type="ChEBI" id="CHEBI:28938"/>
        <dbReference type="ChEBI" id="CHEBI:61481"/>
        <dbReference type="ChEBI" id="CHEBI:61555"/>
        <dbReference type="EC" id="3.5.4.13"/>
    </reaction>
</comment>
<comment type="pathway">
    <text evidence="1">Pyrimidine metabolism; dUMP biosynthesis; dUMP from dCTP (dUTP route): step 1/2.</text>
</comment>
<comment type="subunit">
    <text evidence="1">Homotrimer.</text>
</comment>
<comment type="similarity">
    <text evidence="1">Belongs to the dCTP deaminase family.</text>
</comment>
<name>DCD_BORPA</name>
<feature type="chain" id="PRO_0000155967" description="dCTP deaminase">
    <location>
        <begin position="1"/>
        <end position="187"/>
    </location>
</feature>
<feature type="active site" description="Proton donor/acceptor" evidence="1">
    <location>
        <position position="136"/>
    </location>
</feature>
<feature type="binding site" evidence="1">
    <location>
        <begin position="110"/>
        <end position="115"/>
    </location>
    <ligand>
        <name>dCTP</name>
        <dbReference type="ChEBI" id="CHEBI:61481"/>
    </ligand>
</feature>
<feature type="binding site" evidence="1">
    <location>
        <begin position="134"/>
        <end position="136"/>
    </location>
    <ligand>
        <name>dCTP</name>
        <dbReference type="ChEBI" id="CHEBI:61481"/>
    </ligand>
</feature>
<feature type="binding site" evidence="1">
    <location>
        <position position="155"/>
    </location>
    <ligand>
        <name>dCTP</name>
        <dbReference type="ChEBI" id="CHEBI:61481"/>
    </ligand>
</feature>
<feature type="binding site" evidence="1">
    <location>
        <position position="169"/>
    </location>
    <ligand>
        <name>dCTP</name>
        <dbReference type="ChEBI" id="CHEBI:61481"/>
    </ligand>
</feature>
<feature type="binding site" evidence="1">
    <location>
        <position position="179"/>
    </location>
    <ligand>
        <name>dCTP</name>
        <dbReference type="ChEBI" id="CHEBI:61481"/>
    </ligand>
</feature>
<reference key="1">
    <citation type="journal article" date="2003" name="Nat. Genet.">
        <title>Comparative analysis of the genome sequences of Bordetella pertussis, Bordetella parapertussis and Bordetella bronchiseptica.</title>
        <authorList>
            <person name="Parkhill J."/>
            <person name="Sebaihia M."/>
            <person name="Preston A."/>
            <person name="Murphy L.D."/>
            <person name="Thomson N.R."/>
            <person name="Harris D.E."/>
            <person name="Holden M.T.G."/>
            <person name="Churcher C.M."/>
            <person name="Bentley S.D."/>
            <person name="Mungall K.L."/>
            <person name="Cerdeno-Tarraga A.-M."/>
            <person name="Temple L."/>
            <person name="James K.D."/>
            <person name="Harris B."/>
            <person name="Quail M.A."/>
            <person name="Achtman M."/>
            <person name="Atkin R."/>
            <person name="Baker S."/>
            <person name="Basham D."/>
            <person name="Bason N."/>
            <person name="Cherevach I."/>
            <person name="Chillingworth T."/>
            <person name="Collins M."/>
            <person name="Cronin A."/>
            <person name="Davis P."/>
            <person name="Doggett J."/>
            <person name="Feltwell T."/>
            <person name="Goble A."/>
            <person name="Hamlin N."/>
            <person name="Hauser H."/>
            <person name="Holroyd S."/>
            <person name="Jagels K."/>
            <person name="Leather S."/>
            <person name="Moule S."/>
            <person name="Norberczak H."/>
            <person name="O'Neil S."/>
            <person name="Ormond D."/>
            <person name="Price C."/>
            <person name="Rabbinowitsch E."/>
            <person name="Rutter S."/>
            <person name="Sanders M."/>
            <person name="Saunders D."/>
            <person name="Seeger K."/>
            <person name="Sharp S."/>
            <person name="Simmonds M."/>
            <person name="Skelton J."/>
            <person name="Squares R."/>
            <person name="Squares S."/>
            <person name="Stevens K."/>
            <person name="Unwin L."/>
            <person name="Whitehead S."/>
            <person name="Barrell B.G."/>
            <person name="Maskell D.J."/>
        </authorList>
    </citation>
    <scope>NUCLEOTIDE SEQUENCE [LARGE SCALE GENOMIC DNA]</scope>
    <source>
        <strain>12822 / ATCC BAA-587 / NCTC 13253</strain>
    </source>
</reference>